<keyword id="KW-0030">Aminoacyl-tRNA synthetase</keyword>
<keyword id="KW-0067">ATP-binding</keyword>
<keyword id="KW-0963">Cytoplasm</keyword>
<keyword id="KW-0436">Ligase</keyword>
<keyword id="KW-0547">Nucleotide-binding</keyword>
<keyword id="KW-0648">Protein biosynthesis</keyword>
<keyword id="KW-1185">Reference proteome</keyword>
<dbReference type="EC" id="6.1.1.21" evidence="2"/>
<dbReference type="EMBL" id="AE004092">
    <property type="protein sequence ID" value="AAK34794.1"/>
    <property type="molecule type" value="Genomic_DNA"/>
</dbReference>
<dbReference type="EMBL" id="CP000017">
    <property type="protein sequence ID" value="AAZ52432.1"/>
    <property type="molecule type" value="Genomic_DNA"/>
</dbReference>
<dbReference type="RefSeq" id="NP_270073.1">
    <property type="nucleotide sequence ID" value="NC_002737.2"/>
</dbReference>
<dbReference type="SMR" id="Q99XK9"/>
<dbReference type="PaxDb" id="1314-HKU360_01927"/>
<dbReference type="KEGG" id="spy:SPy_2157"/>
<dbReference type="KEGG" id="spz:M5005_Spy1814"/>
<dbReference type="PATRIC" id="fig|160490.10.peg.1869"/>
<dbReference type="HOGENOM" id="CLU_025113_1_1_9"/>
<dbReference type="OMA" id="CGGGNFK"/>
<dbReference type="Proteomes" id="UP000000750">
    <property type="component" value="Chromosome"/>
</dbReference>
<dbReference type="GO" id="GO:0005737">
    <property type="term" value="C:cytoplasm"/>
    <property type="evidence" value="ECO:0007669"/>
    <property type="project" value="UniProtKB-SubCell"/>
</dbReference>
<dbReference type="GO" id="GO:0005524">
    <property type="term" value="F:ATP binding"/>
    <property type="evidence" value="ECO:0007669"/>
    <property type="project" value="UniProtKB-UniRule"/>
</dbReference>
<dbReference type="GO" id="GO:0140096">
    <property type="term" value="F:catalytic activity, acting on a protein"/>
    <property type="evidence" value="ECO:0007669"/>
    <property type="project" value="UniProtKB-ARBA"/>
</dbReference>
<dbReference type="GO" id="GO:0004821">
    <property type="term" value="F:histidine-tRNA ligase activity"/>
    <property type="evidence" value="ECO:0007669"/>
    <property type="project" value="UniProtKB-UniRule"/>
</dbReference>
<dbReference type="GO" id="GO:0016740">
    <property type="term" value="F:transferase activity"/>
    <property type="evidence" value="ECO:0007669"/>
    <property type="project" value="UniProtKB-ARBA"/>
</dbReference>
<dbReference type="GO" id="GO:0006427">
    <property type="term" value="P:histidyl-tRNA aminoacylation"/>
    <property type="evidence" value="ECO:0007669"/>
    <property type="project" value="UniProtKB-UniRule"/>
</dbReference>
<dbReference type="CDD" id="cd00773">
    <property type="entry name" value="HisRS-like_core"/>
    <property type="match status" value="1"/>
</dbReference>
<dbReference type="CDD" id="cd00859">
    <property type="entry name" value="HisRS_anticodon"/>
    <property type="match status" value="1"/>
</dbReference>
<dbReference type="FunFam" id="3.30.930.10:FF:000005">
    <property type="entry name" value="Histidine--tRNA ligase"/>
    <property type="match status" value="1"/>
</dbReference>
<dbReference type="Gene3D" id="3.40.50.800">
    <property type="entry name" value="Anticodon-binding domain"/>
    <property type="match status" value="1"/>
</dbReference>
<dbReference type="Gene3D" id="3.30.930.10">
    <property type="entry name" value="Bira Bifunctional Protein, Domain 2"/>
    <property type="match status" value="1"/>
</dbReference>
<dbReference type="HAMAP" id="MF_00127">
    <property type="entry name" value="His_tRNA_synth"/>
    <property type="match status" value="1"/>
</dbReference>
<dbReference type="InterPro" id="IPR006195">
    <property type="entry name" value="aa-tRNA-synth_II"/>
</dbReference>
<dbReference type="InterPro" id="IPR045864">
    <property type="entry name" value="aa-tRNA-synth_II/BPL/LPL"/>
</dbReference>
<dbReference type="InterPro" id="IPR004154">
    <property type="entry name" value="Anticodon-bd"/>
</dbReference>
<dbReference type="InterPro" id="IPR036621">
    <property type="entry name" value="Anticodon-bd_dom_sf"/>
</dbReference>
<dbReference type="InterPro" id="IPR015807">
    <property type="entry name" value="His-tRNA-ligase"/>
</dbReference>
<dbReference type="InterPro" id="IPR041715">
    <property type="entry name" value="HisRS-like_core"/>
</dbReference>
<dbReference type="InterPro" id="IPR004516">
    <property type="entry name" value="HisRS/HisZ"/>
</dbReference>
<dbReference type="InterPro" id="IPR033656">
    <property type="entry name" value="HisRS_anticodon"/>
</dbReference>
<dbReference type="NCBIfam" id="TIGR00442">
    <property type="entry name" value="hisS"/>
    <property type="match status" value="1"/>
</dbReference>
<dbReference type="PANTHER" id="PTHR43707:SF1">
    <property type="entry name" value="HISTIDINE--TRNA LIGASE, MITOCHONDRIAL-RELATED"/>
    <property type="match status" value="1"/>
</dbReference>
<dbReference type="PANTHER" id="PTHR43707">
    <property type="entry name" value="HISTIDYL-TRNA SYNTHETASE"/>
    <property type="match status" value="1"/>
</dbReference>
<dbReference type="Pfam" id="PF03129">
    <property type="entry name" value="HGTP_anticodon"/>
    <property type="match status" value="1"/>
</dbReference>
<dbReference type="Pfam" id="PF13393">
    <property type="entry name" value="tRNA-synt_His"/>
    <property type="match status" value="1"/>
</dbReference>
<dbReference type="PIRSF" id="PIRSF001549">
    <property type="entry name" value="His-tRNA_synth"/>
    <property type="match status" value="1"/>
</dbReference>
<dbReference type="SUPFAM" id="SSF52954">
    <property type="entry name" value="Class II aaRS ABD-related"/>
    <property type="match status" value="1"/>
</dbReference>
<dbReference type="SUPFAM" id="SSF55681">
    <property type="entry name" value="Class II aaRS and biotin synthetases"/>
    <property type="match status" value="1"/>
</dbReference>
<dbReference type="PROSITE" id="PS50862">
    <property type="entry name" value="AA_TRNA_LIGASE_II"/>
    <property type="match status" value="1"/>
</dbReference>
<evidence type="ECO:0000250" key="1"/>
<evidence type="ECO:0000255" key="2">
    <source>
        <dbReference type="HAMAP-Rule" id="MF_00127"/>
    </source>
</evidence>
<sequence>MKLQKPKGTQDILPGDAAKWQYVESVARDTFSQYNYGEIRTPMFEHYEVISRSVGDTTDIVTKEMYDFYDKGDRHITLRPEGTAPVVRSYVENKLFAPEVQKPVKLYYIGSMFRYERPQAGRLREFHQIGVECFGAANPATDVETIAMAYHLFEKLGIKDVTLHLNSLGSPESRAAYRQALIDYLTPMRDQLSKDSQRRLDENPLRVLDSKEKEDKLAVEKAPSILDYLDEESQAHFEAVKDMLEALDIPYVIDTNMVRGLDYYSHTIFEFITSVEGSDLTICAGGRYDSLVGYFGGPETPGFGFGLGLERLLMIIEKQGITLPIETEMDIYLAVLGDGANSKALELVQAIRRQGFTAERDYLGRKIKAQFKSADTFKAKLVMTLGESEVEAGKAVIKNNRSRQEVEVSFEDMMTNFANISEQLLS</sequence>
<comment type="catalytic activity">
    <reaction evidence="2">
        <text>tRNA(His) + L-histidine + ATP = L-histidyl-tRNA(His) + AMP + diphosphate + H(+)</text>
        <dbReference type="Rhea" id="RHEA:17313"/>
        <dbReference type="Rhea" id="RHEA-COMP:9665"/>
        <dbReference type="Rhea" id="RHEA-COMP:9689"/>
        <dbReference type="ChEBI" id="CHEBI:15378"/>
        <dbReference type="ChEBI" id="CHEBI:30616"/>
        <dbReference type="ChEBI" id="CHEBI:33019"/>
        <dbReference type="ChEBI" id="CHEBI:57595"/>
        <dbReference type="ChEBI" id="CHEBI:78442"/>
        <dbReference type="ChEBI" id="CHEBI:78527"/>
        <dbReference type="ChEBI" id="CHEBI:456215"/>
        <dbReference type="EC" id="6.1.1.21"/>
    </reaction>
</comment>
<comment type="subunit">
    <text evidence="2">Homodimer.</text>
</comment>
<comment type="subcellular location">
    <subcellularLocation>
        <location evidence="2">Cytoplasm</location>
    </subcellularLocation>
</comment>
<comment type="similarity">
    <text evidence="2">Belongs to the class-II aminoacyl-tRNA synthetase family.</text>
</comment>
<gene>
    <name evidence="2" type="primary">hisS</name>
    <name type="ordered locus">SPy_2157</name>
    <name type="ordered locus">M5005_Spy1814</name>
</gene>
<reference key="1">
    <citation type="journal article" date="2001" name="Proc. Natl. Acad. Sci. U.S.A.">
        <title>Complete genome sequence of an M1 strain of Streptococcus pyogenes.</title>
        <authorList>
            <person name="Ferretti J.J."/>
            <person name="McShan W.M."/>
            <person name="Ajdic D.J."/>
            <person name="Savic D.J."/>
            <person name="Savic G."/>
            <person name="Lyon K."/>
            <person name="Primeaux C."/>
            <person name="Sezate S."/>
            <person name="Suvorov A.N."/>
            <person name="Kenton S."/>
            <person name="Lai H.S."/>
            <person name="Lin S.P."/>
            <person name="Qian Y."/>
            <person name="Jia H.G."/>
            <person name="Najar F.Z."/>
            <person name="Ren Q."/>
            <person name="Zhu H."/>
            <person name="Song L."/>
            <person name="White J."/>
            <person name="Yuan X."/>
            <person name="Clifton S.W."/>
            <person name="Roe B.A."/>
            <person name="McLaughlin R.E."/>
        </authorList>
    </citation>
    <scope>NUCLEOTIDE SEQUENCE [LARGE SCALE GENOMIC DNA]</scope>
    <source>
        <strain>ATCC 700294 / SF370 / Serotype M1</strain>
    </source>
</reference>
<reference key="2">
    <citation type="journal article" date="2005" name="J. Infect. Dis.">
        <title>Evolutionary origin and emergence of a highly successful clone of serotype M1 group A Streptococcus involved multiple horizontal gene transfer events.</title>
        <authorList>
            <person name="Sumby P."/>
            <person name="Porcella S.F."/>
            <person name="Madrigal A.G."/>
            <person name="Barbian K.D."/>
            <person name="Virtaneva K."/>
            <person name="Ricklefs S.M."/>
            <person name="Sturdevant D.E."/>
            <person name="Graham M.R."/>
            <person name="Vuopio-Varkila J."/>
            <person name="Hoe N.P."/>
            <person name="Musser J.M."/>
        </authorList>
    </citation>
    <scope>NUCLEOTIDE SEQUENCE [LARGE SCALE GENOMIC DNA]</scope>
    <source>
        <strain>ATCC BAA-947 / MGAS5005 / Serotype M1</strain>
    </source>
</reference>
<accession>Q99XK9</accession>
<accession>Q48W43</accession>
<organism>
    <name type="scientific">Streptococcus pyogenes serotype M1</name>
    <dbReference type="NCBI Taxonomy" id="301447"/>
    <lineage>
        <taxon>Bacteria</taxon>
        <taxon>Bacillati</taxon>
        <taxon>Bacillota</taxon>
        <taxon>Bacilli</taxon>
        <taxon>Lactobacillales</taxon>
        <taxon>Streptococcaceae</taxon>
        <taxon>Streptococcus</taxon>
    </lineage>
</organism>
<proteinExistence type="inferred from homology"/>
<name>SYH_STRP1</name>
<feature type="initiator methionine" description="Removed" evidence="1">
    <location>
        <position position="1"/>
    </location>
</feature>
<feature type="chain" id="PRO_0000136266" description="Histidine--tRNA ligase">
    <location>
        <begin position="2"/>
        <end position="426"/>
    </location>
</feature>
<protein>
    <recommendedName>
        <fullName evidence="2">Histidine--tRNA ligase</fullName>
        <ecNumber evidence="2">6.1.1.21</ecNumber>
    </recommendedName>
    <alternativeName>
        <fullName evidence="2">Histidyl-tRNA synthetase</fullName>
        <shortName evidence="2">HisRS</shortName>
    </alternativeName>
</protein>